<proteinExistence type="evidence at protein level"/>
<keyword id="KW-1217">Cell adhesion impairing toxin</keyword>
<keyword id="KW-0903">Direct protein sequencing</keyword>
<keyword id="KW-1015">Disulfide bond</keyword>
<keyword id="KW-1199">Hemostasis impairing toxin</keyword>
<keyword id="KW-1201">Platelet aggregation inhibiting toxin</keyword>
<keyword id="KW-0964">Secreted</keyword>
<keyword id="KW-0800">Toxin</keyword>
<accession>P68521</accession>
<accession>P31980</accession>
<evidence type="ECO:0000250" key="1"/>
<evidence type="ECO:0000250" key="2">
    <source>
        <dbReference type="UniProtKB" id="Q0NZX5"/>
    </source>
</evidence>
<evidence type="ECO:0000255" key="3">
    <source>
        <dbReference type="PROSITE-ProRule" id="PRU00068"/>
    </source>
</evidence>
<evidence type="ECO:0000269" key="4">
    <source>
    </source>
</evidence>
<evidence type="ECO:0000303" key="5">
    <source>
    </source>
</evidence>
<evidence type="ECO:0000305" key="6"/>
<evidence type="ECO:0000305" key="7">
    <source>
    </source>
</evidence>
<dbReference type="PIR" id="D43019">
    <property type="entry name" value="D43019"/>
</dbReference>
<dbReference type="SMR" id="P68521"/>
<dbReference type="GO" id="GO:0005576">
    <property type="term" value="C:extracellular region"/>
    <property type="evidence" value="ECO:0007669"/>
    <property type="project" value="UniProtKB-SubCell"/>
</dbReference>
<dbReference type="GO" id="GO:0005886">
    <property type="term" value="C:plasma membrane"/>
    <property type="evidence" value="ECO:0007669"/>
    <property type="project" value="TreeGrafter"/>
</dbReference>
<dbReference type="GO" id="GO:0090729">
    <property type="term" value="F:toxin activity"/>
    <property type="evidence" value="ECO:0007669"/>
    <property type="project" value="UniProtKB-KW"/>
</dbReference>
<dbReference type="FunFam" id="4.10.70.10:FF:000005">
    <property type="entry name" value="Zinc metalloproteinase/disintegrin"/>
    <property type="match status" value="1"/>
</dbReference>
<dbReference type="Gene3D" id="4.10.70.10">
    <property type="entry name" value="Disintegrin domain"/>
    <property type="match status" value="1"/>
</dbReference>
<dbReference type="InterPro" id="IPR018358">
    <property type="entry name" value="Disintegrin_CS"/>
</dbReference>
<dbReference type="InterPro" id="IPR001762">
    <property type="entry name" value="Disintegrin_dom"/>
</dbReference>
<dbReference type="InterPro" id="IPR036436">
    <property type="entry name" value="Disintegrin_dom_sf"/>
</dbReference>
<dbReference type="PANTHER" id="PTHR11905">
    <property type="entry name" value="ADAM A DISINTEGRIN AND METALLOPROTEASE DOMAIN"/>
    <property type="match status" value="1"/>
</dbReference>
<dbReference type="PANTHER" id="PTHR11905:SF32">
    <property type="entry name" value="DISINTEGRIN AND METALLOPROTEINASE DOMAIN-CONTAINING PROTEIN 28"/>
    <property type="match status" value="1"/>
</dbReference>
<dbReference type="Pfam" id="PF00200">
    <property type="entry name" value="Disintegrin"/>
    <property type="match status" value="1"/>
</dbReference>
<dbReference type="PRINTS" id="PR00289">
    <property type="entry name" value="DISINTEGRIN"/>
</dbReference>
<dbReference type="SMART" id="SM00050">
    <property type="entry name" value="DISIN"/>
    <property type="match status" value="1"/>
</dbReference>
<dbReference type="SUPFAM" id="SSF57552">
    <property type="entry name" value="Blood coagulation inhibitor (disintegrin)"/>
    <property type="match status" value="1"/>
</dbReference>
<dbReference type="PROSITE" id="PS00427">
    <property type="entry name" value="DISINTEGRIN_1"/>
    <property type="match status" value="1"/>
</dbReference>
<dbReference type="PROSITE" id="PS50214">
    <property type="entry name" value="DISINTEGRIN_2"/>
    <property type="match status" value="1"/>
</dbReference>
<name>VM2I_CRODD</name>
<sequence>AGEECDCGSPANPCCDAATCKLRPGAQCADGLCCDQCRFIKKGTVCRPARGDWNDDTCTGQSADCPRNGLYG</sequence>
<reference key="1">
    <citation type="journal article" date="1993" name="J. Biol. Chem.">
        <title>Characterization of the integrin specificities of disintegrins isolated from American pit viper venoms.</title>
        <authorList>
            <person name="Scarborough R.M."/>
            <person name="Rose J.W."/>
            <person name="Naughton M.A."/>
            <person name="Phillips D.R."/>
            <person name="Nannizzi L."/>
            <person name="Arfsten A."/>
            <person name="Campbell A.M."/>
            <person name="Charo I.F."/>
        </authorList>
    </citation>
    <scope>PROTEIN SEQUENCE</scope>
    <scope>SUBCELLULAR LOCATION</scope>
    <source>
        <tissue>Venom</tissue>
    </source>
</reference>
<organism>
    <name type="scientific">Crotalus durissus durissus</name>
    <name type="common">Central American rattlesnake</name>
    <dbReference type="NCBI Taxonomy" id="31150"/>
    <lineage>
        <taxon>Eukaryota</taxon>
        <taxon>Metazoa</taxon>
        <taxon>Chordata</taxon>
        <taxon>Craniata</taxon>
        <taxon>Vertebrata</taxon>
        <taxon>Euteleostomi</taxon>
        <taxon>Lepidosauria</taxon>
        <taxon>Squamata</taxon>
        <taxon>Bifurcata</taxon>
        <taxon>Unidentata</taxon>
        <taxon>Episquamata</taxon>
        <taxon>Toxicofera</taxon>
        <taxon>Serpentes</taxon>
        <taxon>Colubroidea</taxon>
        <taxon>Viperidae</taxon>
        <taxon>Crotalinae</taxon>
        <taxon>Crotalus</taxon>
    </lineage>
</organism>
<feature type="chain" id="PRO_0000101793" description="Disintegrin durissin" evidence="4">
    <location>
        <begin position="1"/>
        <end position="72"/>
    </location>
</feature>
<feature type="domain" description="Disintegrin" evidence="3">
    <location>
        <begin position="1"/>
        <end position="72"/>
    </location>
</feature>
<feature type="short sequence motif" description="Cell attachment site">
    <location>
        <begin position="50"/>
        <end position="52"/>
    </location>
</feature>
<feature type="disulfide bond" evidence="2">
    <location>
        <begin position="5"/>
        <end position="20"/>
    </location>
</feature>
<feature type="disulfide bond" evidence="2">
    <location>
        <begin position="7"/>
        <end position="15"/>
    </location>
</feature>
<feature type="disulfide bond" evidence="2">
    <location>
        <begin position="14"/>
        <end position="37"/>
    </location>
</feature>
<feature type="disulfide bond" evidence="2">
    <location>
        <begin position="28"/>
        <end position="34"/>
    </location>
</feature>
<feature type="disulfide bond" evidence="2">
    <location>
        <begin position="33"/>
        <end position="58"/>
    </location>
</feature>
<feature type="disulfide bond" evidence="2 3">
    <location>
        <begin position="46"/>
        <end position="65"/>
    </location>
</feature>
<protein>
    <recommendedName>
        <fullName evidence="5">Disintegrin durissin</fullName>
    </recommendedName>
    <alternativeName>
        <fullName>Platelet aggregation activation inhibitor</fullName>
    </alternativeName>
</protein>
<comment type="function">
    <text>Inhibits fibrinogen interaction with platelets. Acts by binding to alpha-IIb/beta-3 (ITGA2B/ITGB3) on the platelet surface and inhibits aggregation induced by ADP, thrombin, platelet-activating factor and collagen.</text>
</comment>
<comment type="subunit">
    <text evidence="1">Monomer (disintegrin).</text>
</comment>
<comment type="subcellular location">
    <subcellularLocation>
        <location evidence="4">Secreted</location>
    </subcellularLocation>
</comment>
<comment type="tissue specificity">
    <text evidence="7">Expressed by the venom gland.</text>
</comment>
<comment type="miscellaneous">
    <text>The disintegrin belongs to the medium disintegrin subfamily.</text>
</comment>
<comment type="similarity">
    <text evidence="6">Belongs to the venom metalloproteinase (M12B) family. P-II subfamily. P-IIa sub-subfamily.</text>
</comment>